<dbReference type="EC" id="3.1.26.4" evidence="1"/>
<dbReference type="EMBL" id="AP006861">
    <property type="protein sequence ID" value="BAE81481.1"/>
    <property type="molecule type" value="Genomic_DNA"/>
</dbReference>
<dbReference type="RefSeq" id="WP_011458259.1">
    <property type="nucleotide sequence ID" value="NC_007899.1"/>
</dbReference>
<dbReference type="SMR" id="Q253Q7"/>
<dbReference type="STRING" id="264202.CF0709"/>
<dbReference type="KEGG" id="cfe:CF0709"/>
<dbReference type="eggNOG" id="COG1039">
    <property type="taxonomic scope" value="Bacteria"/>
</dbReference>
<dbReference type="HOGENOM" id="CLU_059546_0_0_0"/>
<dbReference type="OrthoDB" id="9777935at2"/>
<dbReference type="Proteomes" id="UP000001260">
    <property type="component" value="Chromosome"/>
</dbReference>
<dbReference type="GO" id="GO:0005737">
    <property type="term" value="C:cytoplasm"/>
    <property type="evidence" value="ECO:0007669"/>
    <property type="project" value="UniProtKB-SubCell"/>
</dbReference>
<dbReference type="GO" id="GO:0032299">
    <property type="term" value="C:ribonuclease H2 complex"/>
    <property type="evidence" value="ECO:0007669"/>
    <property type="project" value="TreeGrafter"/>
</dbReference>
<dbReference type="GO" id="GO:0000287">
    <property type="term" value="F:magnesium ion binding"/>
    <property type="evidence" value="ECO:0007669"/>
    <property type="project" value="UniProtKB-UniRule"/>
</dbReference>
<dbReference type="GO" id="GO:0003723">
    <property type="term" value="F:RNA binding"/>
    <property type="evidence" value="ECO:0007669"/>
    <property type="project" value="InterPro"/>
</dbReference>
<dbReference type="GO" id="GO:0004523">
    <property type="term" value="F:RNA-DNA hybrid ribonuclease activity"/>
    <property type="evidence" value="ECO:0007669"/>
    <property type="project" value="UniProtKB-UniRule"/>
</dbReference>
<dbReference type="GO" id="GO:0043137">
    <property type="term" value="P:DNA replication, removal of RNA primer"/>
    <property type="evidence" value="ECO:0007669"/>
    <property type="project" value="TreeGrafter"/>
</dbReference>
<dbReference type="GO" id="GO:0006298">
    <property type="term" value="P:mismatch repair"/>
    <property type="evidence" value="ECO:0007669"/>
    <property type="project" value="TreeGrafter"/>
</dbReference>
<dbReference type="CDD" id="cd06590">
    <property type="entry name" value="RNase_HII_bacteria_HIII_like"/>
    <property type="match status" value="1"/>
</dbReference>
<dbReference type="CDD" id="cd14796">
    <property type="entry name" value="RNAse_HIII_N"/>
    <property type="match status" value="1"/>
</dbReference>
<dbReference type="Gene3D" id="3.30.420.10">
    <property type="entry name" value="Ribonuclease H-like superfamily/Ribonuclease H"/>
    <property type="match status" value="1"/>
</dbReference>
<dbReference type="Gene3D" id="3.30.310.10">
    <property type="entry name" value="TATA-Binding Protein"/>
    <property type="match status" value="1"/>
</dbReference>
<dbReference type="HAMAP" id="MF_00053">
    <property type="entry name" value="RNase_HIII"/>
    <property type="match status" value="1"/>
</dbReference>
<dbReference type="InterPro" id="IPR001352">
    <property type="entry name" value="RNase_HII/HIII"/>
</dbReference>
<dbReference type="InterPro" id="IPR024567">
    <property type="entry name" value="RNase_HII/HIII_dom"/>
</dbReference>
<dbReference type="InterPro" id="IPR004641">
    <property type="entry name" value="RNase_HIII"/>
</dbReference>
<dbReference type="InterPro" id="IPR024568">
    <property type="entry name" value="RNase_HIII_N"/>
</dbReference>
<dbReference type="InterPro" id="IPR012337">
    <property type="entry name" value="RNaseH-like_sf"/>
</dbReference>
<dbReference type="InterPro" id="IPR036397">
    <property type="entry name" value="RNaseH_sf"/>
</dbReference>
<dbReference type="InterPro" id="IPR012295">
    <property type="entry name" value="TBP_dom_sf"/>
</dbReference>
<dbReference type="NCBIfam" id="TIGR00716">
    <property type="entry name" value="rnhC"/>
    <property type="match status" value="1"/>
</dbReference>
<dbReference type="PANTHER" id="PTHR10954:SF23">
    <property type="entry name" value="RIBONUCLEASE"/>
    <property type="match status" value="1"/>
</dbReference>
<dbReference type="PANTHER" id="PTHR10954">
    <property type="entry name" value="RIBONUCLEASE H2 SUBUNIT A"/>
    <property type="match status" value="1"/>
</dbReference>
<dbReference type="Pfam" id="PF11858">
    <property type="entry name" value="DUF3378"/>
    <property type="match status" value="1"/>
</dbReference>
<dbReference type="Pfam" id="PF01351">
    <property type="entry name" value="RNase_HII"/>
    <property type="match status" value="1"/>
</dbReference>
<dbReference type="PIRSF" id="PIRSF037748">
    <property type="entry name" value="RnhC"/>
    <property type="match status" value="1"/>
</dbReference>
<dbReference type="SUPFAM" id="SSF53098">
    <property type="entry name" value="Ribonuclease H-like"/>
    <property type="match status" value="1"/>
</dbReference>
<dbReference type="PROSITE" id="PS51975">
    <property type="entry name" value="RNASE_H_2"/>
    <property type="match status" value="1"/>
</dbReference>
<proteinExistence type="inferred from homology"/>
<comment type="function">
    <text evidence="1">Endonuclease that specifically degrades the RNA of RNA-DNA hybrids.</text>
</comment>
<comment type="catalytic activity">
    <reaction evidence="1">
        <text>Endonucleolytic cleavage to 5'-phosphomonoester.</text>
        <dbReference type="EC" id="3.1.26.4"/>
    </reaction>
</comment>
<comment type="cofactor">
    <cofactor evidence="1">
        <name>Mn(2+)</name>
        <dbReference type="ChEBI" id="CHEBI:29035"/>
    </cofactor>
    <cofactor evidence="1">
        <name>Mg(2+)</name>
        <dbReference type="ChEBI" id="CHEBI:18420"/>
    </cofactor>
    <text evidence="1">Manganese or magnesium. Binds 1 divalent metal ion per monomer in the absence of substrate. May bind a second metal ion after substrate binding.</text>
</comment>
<comment type="subcellular location">
    <subcellularLocation>
        <location evidence="1">Cytoplasm</location>
    </subcellularLocation>
</comment>
<comment type="similarity">
    <text evidence="1">Belongs to the RNase HII family. RnhC subfamily.</text>
</comment>
<gene>
    <name evidence="1" type="primary">rnhC</name>
    <name type="ordered locus">CF0709</name>
</gene>
<feature type="chain" id="PRO_1000031227" description="Ribonuclease HIII">
    <location>
        <begin position="1"/>
        <end position="300"/>
    </location>
</feature>
<feature type="domain" description="RNase H type-2" evidence="2">
    <location>
        <begin position="86"/>
        <end position="300"/>
    </location>
</feature>
<feature type="binding site" evidence="1">
    <location>
        <position position="92"/>
    </location>
    <ligand>
        <name>a divalent metal cation</name>
        <dbReference type="ChEBI" id="CHEBI:60240"/>
    </ligand>
</feature>
<feature type="binding site" evidence="1">
    <location>
        <position position="93"/>
    </location>
    <ligand>
        <name>a divalent metal cation</name>
        <dbReference type="ChEBI" id="CHEBI:60240"/>
    </ligand>
</feature>
<feature type="binding site" evidence="1">
    <location>
        <position position="196"/>
    </location>
    <ligand>
        <name>a divalent metal cation</name>
        <dbReference type="ChEBI" id="CHEBI:60240"/>
    </ligand>
</feature>
<name>RNH3_CHLFF</name>
<evidence type="ECO:0000255" key="1">
    <source>
        <dbReference type="HAMAP-Rule" id="MF_00053"/>
    </source>
</evidence>
<evidence type="ECO:0000255" key="2">
    <source>
        <dbReference type="PROSITE-ProRule" id="PRU01319"/>
    </source>
</evidence>
<sequence length="300" mass="33312">MSTPFVTTLSSSLYGLLKDRLEEKGFILTQPQYTIFQARSPSVMCTLYSSGKLVVQGKGSKEFIEFFLEPEILLTFTHNRVEADLRPRLGVDESGKGDFFGPLCIAGVYARDEETLKSLYKTKIQDSKLLNDAQILSLAKTIRSSCTYDVMILYPEKYNELYGKFHNLNILLAWAHATIIDKLAPRPSGEVFAISDQFASSESVLLNALKKKNTDISVIQKVRAEQDIVVAAASILAREAFITTMTNLEQRFSLKLPKGASAQVKSVGKSILNSRGKEVLSLVCKTHFKTFNEICDSASA</sequence>
<reference key="1">
    <citation type="journal article" date="2006" name="DNA Res.">
        <title>Genome sequence of the cat pathogen, Chlamydophila felis.</title>
        <authorList>
            <person name="Azuma Y."/>
            <person name="Hirakawa H."/>
            <person name="Yamashita A."/>
            <person name="Cai Y."/>
            <person name="Rahman M.A."/>
            <person name="Suzuki H."/>
            <person name="Mitaku S."/>
            <person name="Toh H."/>
            <person name="Goto S."/>
            <person name="Murakami T."/>
            <person name="Sugi K."/>
            <person name="Hayashi H."/>
            <person name="Fukushi H."/>
            <person name="Hattori M."/>
            <person name="Kuhara S."/>
            <person name="Shirai M."/>
        </authorList>
    </citation>
    <scope>NUCLEOTIDE SEQUENCE [LARGE SCALE GENOMIC DNA]</scope>
    <source>
        <strain>Fe/C-56</strain>
    </source>
</reference>
<protein>
    <recommendedName>
        <fullName evidence="1">Ribonuclease HIII</fullName>
        <shortName evidence="1">RNase HIII</shortName>
        <ecNumber evidence="1">3.1.26.4</ecNumber>
    </recommendedName>
</protein>
<keyword id="KW-0963">Cytoplasm</keyword>
<keyword id="KW-0255">Endonuclease</keyword>
<keyword id="KW-0378">Hydrolase</keyword>
<keyword id="KW-0460">Magnesium</keyword>
<keyword id="KW-0479">Metal-binding</keyword>
<keyword id="KW-0540">Nuclease</keyword>
<organism>
    <name type="scientific">Chlamydia felis (strain Fe/C-56)</name>
    <name type="common">Chlamydophila felis</name>
    <dbReference type="NCBI Taxonomy" id="264202"/>
    <lineage>
        <taxon>Bacteria</taxon>
        <taxon>Pseudomonadati</taxon>
        <taxon>Chlamydiota</taxon>
        <taxon>Chlamydiia</taxon>
        <taxon>Chlamydiales</taxon>
        <taxon>Chlamydiaceae</taxon>
        <taxon>Chlamydia/Chlamydophila group</taxon>
        <taxon>Chlamydia</taxon>
    </lineage>
</organism>
<accession>Q253Q7</accession>